<organism>
    <name type="scientific">Conus tessulatus</name>
    <name type="common">Tessellate cone</name>
    <dbReference type="NCBI Taxonomy" id="101317"/>
    <lineage>
        <taxon>Eukaryota</taxon>
        <taxon>Metazoa</taxon>
        <taxon>Spiralia</taxon>
        <taxon>Lophotrochozoa</taxon>
        <taxon>Mollusca</taxon>
        <taxon>Gastropoda</taxon>
        <taxon>Caenogastropoda</taxon>
        <taxon>Neogastropoda</taxon>
        <taxon>Conoidea</taxon>
        <taxon>Conidae</taxon>
        <taxon>Conus</taxon>
        <taxon>Tesselliconus</taxon>
    </lineage>
</organism>
<name>CT5C_CONTS</name>
<reference key="1">
    <citation type="journal article" date="2001" name="Mol. Biol. Evol.">
        <title>Mechanisms for evolving hypervariability: the case of conopeptides.</title>
        <authorList>
            <person name="Conticello S.G."/>
            <person name="Gilad Y."/>
            <person name="Avidan N."/>
            <person name="Ben-Asher E."/>
            <person name="Levy Z."/>
            <person name="Fainzilber M."/>
        </authorList>
    </citation>
    <scope>NUCLEOTIDE SEQUENCE [MRNA]</scope>
    <source>
        <tissue>Venom duct</tissue>
    </source>
</reference>
<comment type="subcellular location">
    <subcellularLocation>
        <location evidence="5">Secreted</location>
    </subcellularLocation>
</comment>
<comment type="tissue specificity">
    <text evidence="5">Expressed by the venom duct.</text>
</comment>
<comment type="domain">
    <text evidence="4">The cysteine framework is V (CC-CC).</text>
</comment>
<comment type="PTM">
    <text evidence="4">Contains 2 disulfide bonds that can be either 'C1-C3, C2-C4' or 'C1-C4, C2-C3', since these disulfide connectivities have been observed for conotoxins with cysteine framework V (for examples, see AC P0DQQ7 and AC P81755).</text>
</comment>
<comment type="similarity">
    <text evidence="4">Belongs to the conotoxin T superfamily.</text>
</comment>
<keyword id="KW-0027">Amidation</keyword>
<keyword id="KW-1015">Disulfide bond</keyword>
<keyword id="KW-0528">Neurotoxin</keyword>
<keyword id="KW-0964">Secreted</keyword>
<keyword id="KW-0732">Signal</keyword>
<keyword id="KW-0800">Toxin</keyword>
<accession>Q9BPE4</accession>
<proteinExistence type="inferred from homology"/>
<feature type="signal peptide" evidence="3">
    <location>
        <begin position="1"/>
        <end position="22"/>
    </location>
</feature>
<feature type="propeptide" id="PRO_0000404932" evidence="1">
    <location>
        <begin position="23"/>
        <end position="52"/>
    </location>
</feature>
<feature type="peptide" id="PRO_0000404933" description="Conotoxin Ts-011">
    <location>
        <begin position="53"/>
        <end position="63"/>
    </location>
</feature>
<feature type="modified residue" description="Isoleucine amide" evidence="1">
    <location>
        <position position="63"/>
    </location>
</feature>
<evidence type="ECO:0000250" key="1"/>
<evidence type="ECO:0000250" key="2">
    <source>
        <dbReference type="UniProtKB" id="Q9BH75"/>
    </source>
</evidence>
<evidence type="ECO:0000255" key="3"/>
<evidence type="ECO:0000305" key="4"/>
<evidence type="ECO:0000305" key="5">
    <source>
    </source>
</evidence>
<evidence type="ECO:0000312" key="6">
    <source>
        <dbReference type="EMBL" id="AAG60414.1"/>
    </source>
</evidence>
<dbReference type="EMBL" id="AF214986">
    <property type="protein sequence ID" value="AAG60414.1"/>
    <property type="molecule type" value="mRNA"/>
</dbReference>
<dbReference type="ConoServer" id="673">
    <property type="toxin name" value="Ts-011 precursor"/>
</dbReference>
<dbReference type="GO" id="GO:0005576">
    <property type="term" value="C:extracellular region"/>
    <property type="evidence" value="ECO:0007669"/>
    <property type="project" value="UniProtKB-SubCell"/>
</dbReference>
<dbReference type="GO" id="GO:0090729">
    <property type="term" value="F:toxin activity"/>
    <property type="evidence" value="ECO:0007669"/>
    <property type="project" value="UniProtKB-KW"/>
</dbReference>
<dbReference type="InterPro" id="IPR031565">
    <property type="entry name" value="T-conotoxin"/>
</dbReference>
<dbReference type="Pfam" id="PF16981">
    <property type="entry name" value="Chi-conotoxin"/>
    <property type="match status" value="1"/>
</dbReference>
<sequence>MHCLPVLVILLLLIASTPSVDARPKTKDDVPPASFHGADDANRILQTLWNLRGCCEDKTCCFIG</sequence>
<protein>
    <recommendedName>
        <fullName evidence="2">Conotoxin Ts-011</fullName>
    </recommendedName>
    <alternativeName>
        <fullName evidence="6">Conotoxin TsMRCL-012</fullName>
    </alternativeName>
</protein>